<accession>B7MZZ0</accession>
<dbReference type="EMBL" id="CU928162">
    <property type="protein sequence ID" value="CAR09658.1"/>
    <property type="molecule type" value="Genomic_DNA"/>
</dbReference>
<dbReference type="RefSeq" id="WP_000439331.1">
    <property type="nucleotide sequence ID" value="NC_011745.1"/>
</dbReference>
<dbReference type="KEGG" id="ecq:ECED1_3653"/>
<dbReference type="HOGENOM" id="CLU_097887_1_1_6"/>
<dbReference type="Proteomes" id="UP000000748">
    <property type="component" value="Chromosome"/>
</dbReference>
<dbReference type="GO" id="GO:0005886">
    <property type="term" value="C:plasma membrane"/>
    <property type="evidence" value="ECO:0007669"/>
    <property type="project" value="UniProtKB-SubCell"/>
</dbReference>
<dbReference type="HAMAP" id="MF_00143">
    <property type="entry name" value="UPF0114"/>
    <property type="match status" value="1"/>
</dbReference>
<dbReference type="InterPro" id="IPR005134">
    <property type="entry name" value="UPF0114"/>
</dbReference>
<dbReference type="InterPro" id="IPR020761">
    <property type="entry name" value="UPF0114_bac"/>
</dbReference>
<dbReference type="NCBIfam" id="TIGR00645">
    <property type="entry name" value="HI0507"/>
    <property type="match status" value="1"/>
</dbReference>
<dbReference type="PANTHER" id="PTHR38596">
    <property type="entry name" value="UPF0114 PROTEIN YQHA"/>
    <property type="match status" value="1"/>
</dbReference>
<dbReference type="PANTHER" id="PTHR38596:SF1">
    <property type="entry name" value="UPF0114 PROTEIN YQHA"/>
    <property type="match status" value="1"/>
</dbReference>
<dbReference type="Pfam" id="PF03350">
    <property type="entry name" value="UPF0114"/>
    <property type="match status" value="1"/>
</dbReference>
<keyword id="KW-1003">Cell membrane</keyword>
<keyword id="KW-0472">Membrane</keyword>
<keyword id="KW-0812">Transmembrane</keyword>
<keyword id="KW-1133">Transmembrane helix</keyword>
<reference key="1">
    <citation type="journal article" date="2009" name="PLoS Genet.">
        <title>Organised genome dynamics in the Escherichia coli species results in highly diverse adaptive paths.</title>
        <authorList>
            <person name="Touchon M."/>
            <person name="Hoede C."/>
            <person name="Tenaillon O."/>
            <person name="Barbe V."/>
            <person name="Baeriswyl S."/>
            <person name="Bidet P."/>
            <person name="Bingen E."/>
            <person name="Bonacorsi S."/>
            <person name="Bouchier C."/>
            <person name="Bouvet O."/>
            <person name="Calteau A."/>
            <person name="Chiapello H."/>
            <person name="Clermont O."/>
            <person name="Cruveiller S."/>
            <person name="Danchin A."/>
            <person name="Diard M."/>
            <person name="Dossat C."/>
            <person name="Karoui M.E."/>
            <person name="Frapy E."/>
            <person name="Garry L."/>
            <person name="Ghigo J.M."/>
            <person name="Gilles A.M."/>
            <person name="Johnson J."/>
            <person name="Le Bouguenec C."/>
            <person name="Lescat M."/>
            <person name="Mangenot S."/>
            <person name="Martinez-Jehanne V."/>
            <person name="Matic I."/>
            <person name="Nassif X."/>
            <person name="Oztas S."/>
            <person name="Petit M.A."/>
            <person name="Pichon C."/>
            <person name="Rouy Z."/>
            <person name="Ruf C.S."/>
            <person name="Schneider D."/>
            <person name="Tourret J."/>
            <person name="Vacherie B."/>
            <person name="Vallenet D."/>
            <person name="Medigue C."/>
            <person name="Rocha E.P.C."/>
            <person name="Denamur E."/>
        </authorList>
    </citation>
    <scope>NUCLEOTIDE SEQUENCE [LARGE SCALE GENOMIC DNA]</scope>
    <source>
        <strain>ED1a</strain>
    </source>
</reference>
<organism>
    <name type="scientific">Escherichia coli O81 (strain ED1a)</name>
    <dbReference type="NCBI Taxonomy" id="585397"/>
    <lineage>
        <taxon>Bacteria</taxon>
        <taxon>Pseudomonadati</taxon>
        <taxon>Pseudomonadota</taxon>
        <taxon>Gammaproteobacteria</taxon>
        <taxon>Enterobacterales</taxon>
        <taxon>Enterobacteriaceae</taxon>
        <taxon>Escherichia</taxon>
    </lineage>
</organism>
<gene>
    <name evidence="1" type="primary">yqhA</name>
    <name type="ordered locus">ECED1_3653</name>
</gene>
<comment type="subcellular location">
    <subcellularLocation>
        <location evidence="1">Cell membrane</location>
        <topology evidence="1">Multi-pass membrane protein</topology>
    </subcellularLocation>
</comment>
<comment type="similarity">
    <text evidence="1">Belongs to the UPF0114 family.</text>
</comment>
<protein>
    <recommendedName>
        <fullName evidence="1">UPF0114 protein YqhA</fullName>
    </recommendedName>
</protein>
<name>YQHA_ECO81</name>
<feature type="chain" id="PRO_1000197574" description="UPF0114 protein YqhA">
    <location>
        <begin position="1"/>
        <end position="164"/>
    </location>
</feature>
<feature type="transmembrane region" description="Helical" evidence="1">
    <location>
        <begin position="15"/>
        <end position="35"/>
    </location>
</feature>
<feature type="transmembrane region" description="Helical" evidence="1">
    <location>
        <begin position="53"/>
        <end position="73"/>
    </location>
</feature>
<feature type="transmembrane region" description="Helical" evidence="1">
    <location>
        <begin position="136"/>
        <end position="156"/>
    </location>
</feature>
<proteinExistence type="inferred from homology"/>
<sequence length="164" mass="18641">MERFLENAMYASRWLLAPVYFGLSLALVALALKFFQEIIHVLPNIFSMAESDLILVLLSLVDMTLVGGLLVMVMFSGYENFVSQLDISENKEKLNWLGKMDATSLKNKVAASIVAISSIHLLRVFMDAKNVPDNKLMWYVIIHLTFVLSAFVMGYLDRLTRHNH</sequence>
<evidence type="ECO:0000255" key="1">
    <source>
        <dbReference type="HAMAP-Rule" id="MF_00143"/>
    </source>
</evidence>